<protein>
    <recommendedName>
        <fullName>Uncharacterized protein MG296</fullName>
    </recommendedName>
</protein>
<feature type="chain" id="PRO_0000210520" description="Uncharacterized protein MG296">
    <location>
        <begin position="1"/>
        <end position="129"/>
    </location>
</feature>
<keyword id="KW-1185">Reference proteome</keyword>
<gene>
    <name type="ordered locus">MG296</name>
</gene>
<organism>
    <name type="scientific">Mycoplasma genitalium (strain ATCC 33530 / DSM 19775 / NCTC 10195 / G37)</name>
    <name type="common">Mycoplasmoides genitalium</name>
    <dbReference type="NCBI Taxonomy" id="243273"/>
    <lineage>
        <taxon>Bacteria</taxon>
        <taxon>Bacillati</taxon>
        <taxon>Mycoplasmatota</taxon>
        <taxon>Mycoplasmoidales</taxon>
        <taxon>Mycoplasmoidaceae</taxon>
        <taxon>Mycoplasmoides</taxon>
    </lineage>
</organism>
<accession>P47538</accession>
<sequence>MKPQLIAFKKFLQTEFQAVDFETFRINFNLCLKREQDNIVIYEDDDYDDQPFFFKPMLSDGFFIQTEVIKQLDYLAKVVENPKDSDQQCCQNFYEALIVFISALAITKGINPNRFHQRLVNRFAIHAVY</sequence>
<dbReference type="EMBL" id="L43967">
    <property type="protein sequence ID" value="AAC71517.1"/>
    <property type="molecule type" value="Genomic_DNA"/>
</dbReference>
<dbReference type="PIR" id="G64232">
    <property type="entry name" value="G64232"/>
</dbReference>
<dbReference type="RefSeq" id="WP_009885876.1">
    <property type="nucleotide sequence ID" value="NC_000908.2"/>
</dbReference>
<dbReference type="SMR" id="P47538"/>
<dbReference type="STRING" id="243273.MG_296"/>
<dbReference type="GeneID" id="88282459"/>
<dbReference type="KEGG" id="mge:MG_296"/>
<dbReference type="eggNOG" id="ENOG5031Z9K">
    <property type="taxonomic scope" value="Bacteria"/>
</dbReference>
<dbReference type="HOGENOM" id="CLU_1946424_0_0_14"/>
<dbReference type="InParanoid" id="P47538"/>
<dbReference type="OrthoDB" id="9905797at2"/>
<dbReference type="BioCyc" id="MGEN243273:G1GJ2-365-MONOMER"/>
<dbReference type="Proteomes" id="UP000000807">
    <property type="component" value="Chromosome"/>
</dbReference>
<dbReference type="Gene3D" id="1.20.120.510">
    <property type="entry name" value="mg296 homolog like"/>
    <property type="match status" value="1"/>
</dbReference>
<dbReference type="Gene3D" id="1.20.890.20">
    <property type="entry name" value="mpn423 like domain"/>
    <property type="match status" value="1"/>
</dbReference>
<dbReference type="InterPro" id="IPR027371">
    <property type="entry name" value="Mg296-like_C"/>
</dbReference>
<dbReference type="InterPro" id="IPR036340">
    <property type="entry name" value="MG296-like_sf"/>
</dbReference>
<dbReference type="InterPro" id="IPR019097">
    <property type="entry name" value="Mg296_protein"/>
</dbReference>
<dbReference type="Pfam" id="PF09644">
    <property type="entry name" value="Mg296"/>
    <property type="match status" value="1"/>
</dbReference>
<dbReference type="SUPFAM" id="SSF158715">
    <property type="entry name" value="MG296-like"/>
    <property type="match status" value="1"/>
</dbReference>
<name>Y296_MYCGE</name>
<reference key="1">
    <citation type="journal article" date="1995" name="Science">
        <title>The minimal gene complement of Mycoplasma genitalium.</title>
        <authorList>
            <person name="Fraser C.M."/>
            <person name="Gocayne J.D."/>
            <person name="White O."/>
            <person name="Adams M.D."/>
            <person name="Clayton R.A."/>
            <person name="Fleischmann R.D."/>
            <person name="Bult C.J."/>
            <person name="Kerlavage A.R."/>
            <person name="Sutton G.G."/>
            <person name="Kelley J.M."/>
            <person name="Fritchman J.L."/>
            <person name="Weidman J.F."/>
            <person name="Small K.V."/>
            <person name="Sandusky M."/>
            <person name="Fuhrmann J.L."/>
            <person name="Nguyen D.T."/>
            <person name="Utterback T.R."/>
            <person name="Saudek D.M."/>
            <person name="Phillips C.A."/>
            <person name="Merrick J.M."/>
            <person name="Tomb J.-F."/>
            <person name="Dougherty B.A."/>
            <person name="Bott K.F."/>
            <person name="Hu P.-C."/>
            <person name="Lucier T.S."/>
            <person name="Peterson S.N."/>
            <person name="Smith H.O."/>
            <person name="Hutchison C.A. III"/>
            <person name="Venter J.C."/>
        </authorList>
    </citation>
    <scope>NUCLEOTIDE SEQUENCE [LARGE SCALE GENOMIC DNA]</scope>
    <source>
        <strain>ATCC 33530 / DSM 19775 / NCTC 10195 / G37</strain>
    </source>
</reference>
<proteinExistence type="predicted"/>